<proteinExistence type="inferred from homology"/>
<sequence>MATIKDVAKRANVSTTTVSHVINKTRFVAEETRNAVWAAIKELHYSPSAVARSLKVNHTKSIGLLATSSEAAYFAEIIEAVEKNCFQKGYTLILGNAWNNLEKQRAYLSMMAQKRVDGLLVMCSEYPEPLLAMLEEYRHIPMVVMDWGEAKADFTDAVIDNAFEGGYMAGRYLIERGHREIGVIPGPLERNTGAGRLAGFMKAMEEAMIKVPESWIVQGDFEPESGYRAMQQILSQPHRPTAVFCGGDIMAMGALCAADEMGLRVPQDVSLIGYDNVRNARYFTPALTTIHQPKDSLGETAFNMLLDRIVNKREEPQSIEVHPRLIERRSVADGPFRDYRR</sequence>
<accession>B5Z492</accession>
<feature type="chain" id="PRO_1000140287" description="HTH-type transcriptional repressor PurR">
    <location>
        <begin position="1"/>
        <end position="341"/>
    </location>
</feature>
<feature type="domain" description="HTH lacI-type" evidence="1">
    <location>
        <begin position="2"/>
        <end position="56"/>
    </location>
</feature>
<feature type="DNA-binding region" description="H-T-H motif" evidence="1">
    <location>
        <begin position="4"/>
        <end position="23"/>
    </location>
</feature>
<feature type="DNA-binding region" evidence="1">
    <location>
        <begin position="48"/>
        <end position="56"/>
    </location>
</feature>
<feature type="binding site" evidence="1">
    <location>
        <position position="73"/>
    </location>
    <ligand>
        <name>hypoxanthine</name>
        <dbReference type="ChEBI" id="CHEBI:17368"/>
    </ligand>
</feature>
<feature type="binding site" evidence="1">
    <location>
        <position position="190"/>
    </location>
    <ligand>
        <name>hypoxanthine</name>
        <dbReference type="ChEBI" id="CHEBI:17368"/>
    </ligand>
</feature>
<feature type="binding site" evidence="1">
    <location>
        <position position="192"/>
    </location>
    <ligand>
        <name>hypoxanthine</name>
        <dbReference type="ChEBI" id="CHEBI:17368"/>
    </ligand>
</feature>
<feature type="binding site" evidence="1">
    <location>
        <position position="221"/>
    </location>
    <ligand>
        <name>hypoxanthine</name>
        <dbReference type="ChEBI" id="CHEBI:17368"/>
    </ligand>
</feature>
<feature type="binding site" evidence="1">
    <location>
        <position position="275"/>
    </location>
    <ligand>
        <name>hypoxanthine</name>
        <dbReference type="ChEBI" id="CHEBI:17368"/>
    </ligand>
</feature>
<reference key="1">
    <citation type="journal article" date="2011" name="Proc. Natl. Acad. Sci. U.S.A.">
        <title>Genomic anatomy of Escherichia coli O157:H7 outbreaks.</title>
        <authorList>
            <person name="Eppinger M."/>
            <person name="Mammel M.K."/>
            <person name="Leclerc J.E."/>
            <person name="Ravel J."/>
            <person name="Cebula T.A."/>
        </authorList>
    </citation>
    <scope>NUCLEOTIDE SEQUENCE [LARGE SCALE GENOMIC DNA]</scope>
    <source>
        <strain>EC4115 / EHEC</strain>
    </source>
</reference>
<name>PURR_ECO5E</name>
<comment type="function">
    <text evidence="1">Is the main repressor of the genes involved in the de novo synthesis of purine nucleotides, regulating purB, purC, purEK, purF, purHD, purL, purMN and guaBA expression. PurR is allosterically activated to bind its cognate DNA by binding the purine corepressors, hypoxanthine or guanine, thereby effecting transcription repression.</text>
</comment>
<comment type="pathway">
    <text>Purine metabolism; purine nucleotide biosynthesis [regulation].</text>
</comment>
<comment type="subunit">
    <text evidence="1">Homodimer.</text>
</comment>
<comment type="domain">
    <text evidence="1">Consists of two structural and functional domains: an N-terminal DNA-binding domain, approximately the first 60 residues, and a larger C-terminal domain, approximately 280 residues, which imparts the function of corepressor binding and oligomerization.</text>
</comment>
<keyword id="KW-0238">DNA-binding</keyword>
<keyword id="KW-0658">Purine biosynthesis</keyword>
<keyword id="KW-0678">Repressor</keyword>
<keyword id="KW-0804">Transcription</keyword>
<keyword id="KW-0805">Transcription regulation</keyword>
<dbReference type="EMBL" id="CP001164">
    <property type="protein sequence ID" value="ACI38941.1"/>
    <property type="molecule type" value="Genomic_DNA"/>
</dbReference>
<dbReference type="RefSeq" id="WP_000190982.1">
    <property type="nucleotide sequence ID" value="NC_011353.1"/>
</dbReference>
<dbReference type="SMR" id="B5Z492"/>
<dbReference type="GeneID" id="75204504"/>
<dbReference type="KEGG" id="ecf:ECH74115_2372"/>
<dbReference type="HOGENOM" id="CLU_037628_6_2_6"/>
<dbReference type="UniPathway" id="UPA00488"/>
<dbReference type="GO" id="GO:0003700">
    <property type="term" value="F:DNA-binding transcription factor activity"/>
    <property type="evidence" value="ECO:0007669"/>
    <property type="project" value="TreeGrafter"/>
</dbReference>
<dbReference type="GO" id="GO:0000976">
    <property type="term" value="F:transcription cis-regulatory region binding"/>
    <property type="evidence" value="ECO:0007669"/>
    <property type="project" value="TreeGrafter"/>
</dbReference>
<dbReference type="GO" id="GO:0045892">
    <property type="term" value="P:negative regulation of DNA-templated transcription"/>
    <property type="evidence" value="ECO:0007669"/>
    <property type="project" value="UniProtKB-UniRule"/>
</dbReference>
<dbReference type="GO" id="GO:0006164">
    <property type="term" value="P:purine nucleotide biosynthetic process"/>
    <property type="evidence" value="ECO:0007669"/>
    <property type="project" value="UniProtKB-UniPathway"/>
</dbReference>
<dbReference type="CDD" id="cd01392">
    <property type="entry name" value="HTH_LacI"/>
    <property type="match status" value="1"/>
</dbReference>
<dbReference type="CDD" id="cd06275">
    <property type="entry name" value="PBP1_PurR"/>
    <property type="match status" value="1"/>
</dbReference>
<dbReference type="FunFam" id="1.10.260.40:FF:000002">
    <property type="entry name" value="HTH-type transcriptional repressor PurR"/>
    <property type="match status" value="1"/>
</dbReference>
<dbReference type="FunFam" id="3.40.50.2300:FF:000045">
    <property type="entry name" value="HTH-type transcriptional repressor PurR"/>
    <property type="match status" value="1"/>
</dbReference>
<dbReference type="Gene3D" id="3.40.50.2300">
    <property type="match status" value="2"/>
</dbReference>
<dbReference type="Gene3D" id="1.10.260.40">
    <property type="entry name" value="lambda repressor-like DNA-binding domains"/>
    <property type="match status" value="1"/>
</dbReference>
<dbReference type="HAMAP" id="MF_01277">
    <property type="entry name" value="HTH_type_PurR"/>
    <property type="match status" value="1"/>
</dbReference>
<dbReference type="InterPro" id="IPR000843">
    <property type="entry name" value="HTH_LacI"/>
</dbReference>
<dbReference type="InterPro" id="IPR046335">
    <property type="entry name" value="LacI/GalR-like_sensor"/>
</dbReference>
<dbReference type="InterPro" id="IPR010982">
    <property type="entry name" value="Lambda_DNA-bd_dom_sf"/>
</dbReference>
<dbReference type="InterPro" id="IPR028082">
    <property type="entry name" value="Peripla_BP_I"/>
</dbReference>
<dbReference type="InterPro" id="IPR023588">
    <property type="entry name" value="Tscrpt_reg_HTH_PurR"/>
</dbReference>
<dbReference type="NCBIfam" id="NF007979">
    <property type="entry name" value="PRK10703.1"/>
    <property type="match status" value="1"/>
</dbReference>
<dbReference type="PANTHER" id="PTHR30146:SF148">
    <property type="entry name" value="HTH-TYPE TRANSCRIPTIONAL REPRESSOR PURR-RELATED"/>
    <property type="match status" value="1"/>
</dbReference>
<dbReference type="PANTHER" id="PTHR30146">
    <property type="entry name" value="LACI-RELATED TRANSCRIPTIONAL REPRESSOR"/>
    <property type="match status" value="1"/>
</dbReference>
<dbReference type="Pfam" id="PF00356">
    <property type="entry name" value="LacI"/>
    <property type="match status" value="1"/>
</dbReference>
<dbReference type="Pfam" id="PF13377">
    <property type="entry name" value="Peripla_BP_3"/>
    <property type="match status" value="1"/>
</dbReference>
<dbReference type="PRINTS" id="PR00036">
    <property type="entry name" value="HTHLACI"/>
</dbReference>
<dbReference type="SMART" id="SM00354">
    <property type="entry name" value="HTH_LACI"/>
    <property type="match status" value="1"/>
</dbReference>
<dbReference type="SUPFAM" id="SSF47413">
    <property type="entry name" value="lambda repressor-like DNA-binding domains"/>
    <property type="match status" value="1"/>
</dbReference>
<dbReference type="SUPFAM" id="SSF53822">
    <property type="entry name" value="Periplasmic binding protein-like I"/>
    <property type="match status" value="1"/>
</dbReference>
<dbReference type="PROSITE" id="PS00356">
    <property type="entry name" value="HTH_LACI_1"/>
    <property type="match status" value="1"/>
</dbReference>
<dbReference type="PROSITE" id="PS50932">
    <property type="entry name" value="HTH_LACI_2"/>
    <property type="match status" value="1"/>
</dbReference>
<organism>
    <name type="scientific">Escherichia coli O157:H7 (strain EC4115 / EHEC)</name>
    <dbReference type="NCBI Taxonomy" id="444450"/>
    <lineage>
        <taxon>Bacteria</taxon>
        <taxon>Pseudomonadati</taxon>
        <taxon>Pseudomonadota</taxon>
        <taxon>Gammaproteobacteria</taxon>
        <taxon>Enterobacterales</taxon>
        <taxon>Enterobacteriaceae</taxon>
        <taxon>Escherichia</taxon>
    </lineage>
</organism>
<evidence type="ECO:0000255" key="1">
    <source>
        <dbReference type="HAMAP-Rule" id="MF_01277"/>
    </source>
</evidence>
<protein>
    <recommendedName>
        <fullName evidence="1">HTH-type transcriptional repressor PurR</fullName>
    </recommendedName>
    <alternativeName>
        <fullName evidence="1">Pur regulon repressor</fullName>
    </alternativeName>
    <alternativeName>
        <fullName evidence="1">Purine nucleotide synthesis repressor</fullName>
    </alternativeName>
</protein>
<gene>
    <name evidence="1" type="primary">purR</name>
    <name type="ordered locus">ECH74115_2372</name>
</gene>